<sequence>MSSGGLLLLLGLLTLWEVLTPVSSKDHPKFCELPADTGSCKGNVPRFYYNADHHQCLKFIYGGCGGNANNFKTIEECKSTCAA</sequence>
<dbReference type="EMBL" id="AF402327">
    <property type="protein sequence ID" value="AAK95522.1"/>
    <property type="molecule type" value="mRNA"/>
</dbReference>
<dbReference type="SMR" id="Q90W98"/>
<dbReference type="MEROPS" id="I02.052"/>
<dbReference type="GO" id="GO:0005615">
    <property type="term" value="C:extracellular space"/>
    <property type="evidence" value="ECO:0007669"/>
    <property type="project" value="TreeGrafter"/>
</dbReference>
<dbReference type="GO" id="GO:0004867">
    <property type="term" value="F:serine-type endopeptidase inhibitor activity"/>
    <property type="evidence" value="ECO:0007669"/>
    <property type="project" value="UniProtKB-KW"/>
</dbReference>
<dbReference type="CDD" id="cd22594">
    <property type="entry name" value="Kunitz_textilinin-like"/>
    <property type="match status" value="1"/>
</dbReference>
<dbReference type="FunFam" id="4.10.410.10:FF:000021">
    <property type="entry name" value="Serine protease inhibitor, putative"/>
    <property type="match status" value="1"/>
</dbReference>
<dbReference type="Gene3D" id="4.10.410.10">
    <property type="entry name" value="Pancreatic trypsin inhibitor Kunitz domain"/>
    <property type="match status" value="1"/>
</dbReference>
<dbReference type="InterPro" id="IPR002223">
    <property type="entry name" value="Kunitz_BPTI"/>
</dbReference>
<dbReference type="InterPro" id="IPR036880">
    <property type="entry name" value="Kunitz_BPTI_sf"/>
</dbReference>
<dbReference type="InterPro" id="IPR020901">
    <property type="entry name" value="Prtase_inh_Kunz-CS"/>
</dbReference>
<dbReference type="InterPro" id="IPR050098">
    <property type="entry name" value="TFPI/VKTCI-like"/>
</dbReference>
<dbReference type="PANTHER" id="PTHR10083">
    <property type="entry name" value="KUNITZ-TYPE PROTEASE INHIBITOR-RELATED"/>
    <property type="match status" value="1"/>
</dbReference>
<dbReference type="PANTHER" id="PTHR10083:SF376">
    <property type="entry name" value="SERINE PEPTIDASE INHIBITOR, KUNITZ TYPE, 3"/>
    <property type="match status" value="1"/>
</dbReference>
<dbReference type="Pfam" id="PF00014">
    <property type="entry name" value="Kunitz_BPTI"/>
    <property type="match status" value="1"/>
</dbReference>
<dbReference type="PRINTS" id="PR00759">
    <property type="entry name" value="BASICPTASE"/>
</dbReference>
<dbReference type="SMART" id="SM00131">
    <property type="entry name" value="KU"/>
    <property type="match status" value="1"/>
</dbReference>
<dbReference type="SUPFAM" id="SSF57362">
    <property type="entry name" value="BPTI-like"/>
    <property type="match status" value="1"/>
</dbReference>
<dbReference type="PROSITE" id="PS00280">
    <property type="entry name" value="BPTI_KUNITZ_1"/>
    <property type="match status" value="1"/>
</dbReference>
<dbReference type="PROSITE" id="PS50279">
    <property type="entry name" value="BPTI_KUNITZ_2"/>
    <property type="match status" value="1"/>
</dbReference>
<reference key="1">
    <citation type="journal article" date="2002" name="Br. J. Haematol.">
        <title>A family of textilinin genes, two of which encode proteins with antihaemorrhagic properties.</title>
        <authorList>
            <person name="Filippovich I."/>
            <person name="Sorokina N."/>
            <person name="Masci P.P."/>
            <person name="de Jersey J."/>
            <person name="Whitaker A.N."/>
            <person name="Winzor D.J."/>
            <person name="Gaffney P.J."/>
            <person name="Lavin M.F."/>
        </authorList>
    </citation>
    <scope>NUCLEOTIDE SEQUENCE [MRNA]</scope>
    <source>
        <tissue>Venom gland</tissue>
    </source>
</reference>
<feature type="signal peptide" evidence="2">
    <location>
        <begin position="1"/>
        <end position="24"/>
    </location>
</feature>
<feature type="chain" id="PRO_0000376903" description="Kunitz-type serine protease inhibitor textilinin-4">
    <location>
        <begin position="25"/>
        <end position="83"/>
    </location>
</feature>
<feature type="domain" description="BPTI/Kunitz inhibitor" evidence="3">
    <location>
        <begin position="31"/>
        <end position="81"/>
    </location>
</feature>
<feature type="site" description="Reactive bond for trypsin" evidence="1">
    <location>
        <begin position="41"/>
        <end position="42"/>
    </location>
</feature>
<feature type="disulfide bond" evidence="3">
    <location>
        <begin position="31"/>
        <end position="81"/>
    </location>
</feature>
<feature type="disulfide bond" evidence="3">
    <location>
        <begin position="40"/>
        <end position="64"/>
    </location>
</feature>
<feature type="disulfide bond" evidence="3">
    <location>
        <begin position="56"/>
        <end position="77"/>
    </location>
</feature>
<protein>
    <recommendedName>
        <fullName evidence="4">Kunitz-type serine protease inhibitor textilinin-4</fullName>
        <shortName evidence="4">Txln-4</shortName>
    </recommendedName>
</protein>
<organism>
    <name type="scientific">Pseudonaja textilis textilis</name>
    <name type="common">Eastern brown snake</name>
    <dbReference type="NCBI Taxonomy" id="169397"/>
    <lineage>
        <taxon>Eukaryota</taxon>
        <taxon>Metazoa</taxon>
        <taxon>Chordata</taxon>
        <taxon>Craniata</taxon>
        <taxon>Vertebrata</taxon>
        <taxon>Euteleostomi</taxon>
        <taxon>Lepidosauria</taxon>
        <taxon>Squamata</taxon>
        <taxon>Bifurcata</taxon>
        <taxon>Unidentata</taxon>
        <taxon>Episquamata</taxon>
        <taxon>Toxicofera</taxon>
        <taxon>Serpentes</taxon>
        <taxon>Colubroidea</taxon>
        <taxon>Elapidae</taxon>
        <taxon>Hydrophiinae</taxon>
        <taxon>Pseudonaja</taxon>
    </lineage>
</organism>
<name>VKT4_PSETT</name>
<proteinExistence type="evidence at transcript level"/>
<accession>Q90W98</accession>
<keyword id="KW-1015">Disulfide bond</keyword>
<keyword id="KW-0646">Protease inhibitor</keyword>
<keyword id="KW-0964">Secreted</keyword>
<keyword id="KW-0722">Serine protease inhibitor</keyword>
<keyword id="KW-0732">Signal</keyword>
<evidence type="ECO:0000250" key="1"/>
<evidence type="ECO:0000255" key="2"/>
<evidence type="ECO:0000255" key="3">
    <source>
        <dbReference type="PROSITE-ProRule" id="PRU00031"/>
    </source>
</evidence>
<evidence type="ECO:0000303" key="4">
    <source>
    </source>
</evidence>
<evidence type="ECO:0000305" key="5"/>
<comment type="function">
    <text evidence="1">Serine protease inhibitor (By similarity). Does not inhibit plasmin, and does not reduce blood loss in the mouse tail vein blood loss model.</text>
</comment>
<comment type="subcellular location">
    <subcellularLocation>
        <location evidence="1">Secreted</location>
    </subcellularLocation>
</comment>
<comment type="tissue specificity">
    <text>Expressed by the venom gland.</text>
</comment>
<comment type="similarity">
    <text evidence="5">Belongs to the venom Kunitz-type family.</text>
</comment>